<gene>
    <name evidence="1" type="primary">rpoB</name>
    <name type="ordered locus">DvMF_1455</name>
</gene>
<comment type="function">
    <text evidence="1">DNA-dependent RNA polymerase catalyzes the transcription of DNA into RNA using the four ribonucleoside triphosphates as substrates.</text>
</comment>
<comment type="catalytic activity">
    <reaction evidence="1">
        <text>RNA(n) + a ribonucleoside 5'-triphosphate = RNA(n+1) + diphosphate</text>
        <dbReference type="Rhea" id="RHEA:21248"/>
        <dbReference type="Rhea" id="RHEA-COMP:14527"/>
        <dbReference type="Rhea" id="RHEA-COMP:17342"/>
        <dbReference type="ChEBI" id="CHEBI:33019"/>
        <dbReference type="ChEBI" id="CHEBI:61557"/>
        <dbReference type="ChEBI" id="CHEBI:140395"/>
        <dbReference type="EC" id="2.7.7.6"/>
    </reaction>
</comment>
<comment type="subunit">
    <text evidence="1">The RNAP catalytic core consists of 2 alpha, 1 beta, 1 beta' and 1 omega subunit. When a sigma factor is associated with the core the holoenzyme is formed, which can initiate transcription.</text>
</comment>
<comment type="similarity">
    <text evidence="1">Belongs to the RNA polymerase beta chain family.</text>
</comment>
<feature type="chain" id="PRO_1000141686" description="DNA-directed RNA polymerase subunit beta">
    <location>
        <begin position="1"/>
        <end position="1372"/>
    </location>
</feature>
<accession>B8DLM7</accession>
<dbReference type="EC" id="2.7.7.6" evidence="1"/>
<dbReference type="EMBL" id="CP001197">
    <property type="protein sequence ID" value="ACL08403.1"/>
    <property type="molecule type" value="Genomic_DNA"/>
</dbReference>
<dbReference type="SMR" id="B8DLM7"/>
<dbReference type="STRING" id="883.DvMF_1455"/>
<dbReference type="KEGG" id="dvm:DvMF_1455"/>
<dbReference type="eggNOG" id="COG0085">
    <property type="taxonomic scope" value="Bacteria"/>
</dbReference>
<dbReference type="HOGENOM" id="CLU_000524_4_0_7"/>
<dbReference type="OrthoDB" id="9803954at2"/>
<dbReference type="GO" id="GO:0000428">
    <property type="term" value="C:DNA-directed RNA polymerase complex"/>
    <property type="evidence" value="ECO:0007669"/>
    <property type="project" value="UniProtKB-KW"/>
</dbReference>
<dbReference type="GO" id="GO:0003677">
    <property type="term" value="F:DNA binding"/>
    <property type="evidence" value="ECO:0007669"/>
    <property type="project" value="UniProtKB-UniRule"/>
</dbReference>
<dbReference type="GO" id="GO:0003899">
    <property type="term" value="F:DNA-directed RNA polymerase activity"/>
    <property type="evidence" value="ECO:0007669"/>
    <property type="project" value="UniProtKB-UniRule"/>
</dbReference>
<dbReference type="GO" id="GO:0032549">
    <property type="term" value="F:ribonucleoside binding"/>
    <property type="evidence" value="ECO:0007669"/>
    <property type="project" value="InterPro"/>
</dbReference>
<dbReference type="GO" id="GO:0006351">
    <property type="term" value="P:DNA-templated transcription"/>
    <property type="evidence" value="ECO:0007669"/>
    <property type="project" value="UniProtKB-UniRule"/>
</dbReference>
<dbReference type="CDD" id="cd00653">
    <property type="entry name" value="RNA_pol_B_RPB2"/>
    <property type="match status" value="1"/>
</dbReference>
<dbReference type="FunFam" id="3.90.1800.10:FF:000001">
    <property type="entry name" value="DNA-directed RNA polymerase subunit beta"/>
    <property type="match status" value="1"/>
</dbReference>
<dbReference type="Gene3D" id="2.40.50.100">
    <property type="match status" value="1"/>
</dbReference>
<dbReference type="Gene3D" id="2.40.50.150">
    <property type="match status" value="1"/>
</dbReference>
<dbReference type="Gene3D" id="3.90.1100.10">
    <property type="match status" value="2"/>
</dbReference>
<dbReference type="Gene3D" id="2.30.150.10">
    <property type="entry name" value="DNA-directed RNA polymerase, beta subunit, external 1 domain"/>
    <property type="match status" value="1"/>
</dbReference>
<dbReference type="Gene3D" id="2.40.270.10">
    <property type="entry name" value="DNA-directed RNA polymerase, subunit 2, domain 6"/>
    <property type="match status" value="1"/>
</dbReference>
<dbReference type="Gene3D" id="3.90.1800.10">
    <property type="entry name" value="RNA polymerase alpha subunit dimerisation domain"/>
    <property type="match status" value="1"/>
</dbReference>
<dbReference type="Gene3D" id="3.90.1110.10">
    <property type="entry name" value="RNA polymerase Rpb2, domain 2"/>
    <property type="match status" value="1"/>
</dbReference>
<dbReference type="HAMAP" id="MF_01321">
    <property type="entry name" value="RNApol_bact_RpoB"/>
    <property type="match status" value="1"/>
</dbReference>
<dbReference type="InterPro" id="IPR042107">
    <property type="entry name" value="DNA-dir_RNA_pol_bsu_ext_1_sf"/>
</dbReference>
<dbReference type="InterPro" id="IPR019462">
    <property type="entry name" value="DNA-dir_RNA_pol_bsu_external_1"/>
</dbReference>
<dbReference type="InterPro" id="IPR015712">
    <property type="entry name" value="DNA-dir_RNA_pol_su2"/>
</dbReference>
<dbReference type="InterPro" id="IPR007120">
    <property type="entry name" value="DNA-dir_RNAP_su2_dom"/>
</dbReference>
<dbReference type="InterPro" id="IPR037033">
    <property type="entry name" value="DNA-dir_RNAP_su2_hyb_sf"/>
</dbReference>
<dbReference type="InterPro" id="IPR010243">
    <property type="entry name" value="RNA_pol_bsu_bac"/>
</dbReference>
<dbReference type="InterPro" id="IPR007121">
    <property type="entry name" value="RNA_pol_bsu_CS"/>
</dbReference>
<dbReference type="InterPro" id="IPR007644">
    <property type="entry name" value="RNA_pol_bsu_protrusion"/>
</dbReference>
<dbReference type="InterPro" id="IPR007642">
    <property type="entry name" value="RNA_pol_Rpb2_2"/>
</dbReference>
<dbReference type="InterPro" id="IPR037034">
    <property type="entry name" value="RNA_pol_Rpb2_2_sf"/>
</dbReference>
<dbReference type="InterPro" id="IPR007645">
    <property type="entry name" value="RNA_pol_Rpb2_3"/>
</dbReference>
<dbReference type="InterPro" id="IPR007641">
    <property type="entry name" value="RNA_pol_Rpb2_7"/>
</dbReference>
<dbReference type="InterPro" id="IPR014724">
    <property type="entry name" value="RNA_pol_RPB2_OB-fold"/>
</dbReference>
<dbReference type="NCBIfam" id="NF001616">
    <property type="entry name" value="PRK00405.1"/>
    <property type="match status" value="1"/>
</dbReference>
<dbReference type="NCBIfam" id="TIGR02013">
    <property type="entry name" value="rpoB"/>
    <property type="match status" value="1"/>
</dbReference>
<dbReference type="PANTHER" id="PTHR20856">
    <property type="entry name" value="DNA-DIRECTED RNA POLYMERASE I SUBUNIT 2"/>
    <property type="match status" value="1"/>
</dbReference>
<dbReference type="Pfam" id="PF04563">
    <property type="entry name" value="RNA_pol_Rpb2_1"/>
    <property type="match status" value="1"/>
</dbReference>
<dbReference type="Pfam" id="PF04561">
    <property type="entry name" value="RNA_pol_Rpb2_2"/>
    <property type="match status" value="2"/>
</dbReference>
<dbReference type="Pfam" id="PF04565">
    <property type="entry name" value="RNA_pol_Rpb2_3"/>
    <property type="match status" value="1"/>
</dbReference>
<dbReference type="Pfam" id="PF10385">
    <property type="entry name" value="RNA_pol_Rpb2_45"/>
    <property type="match status" value="1"/>
</dbReference>
<dbReference type="Pfam" id="PF00562">
    <property type="entry name" value="RNA_pol_Rpb2_6"/>
    <property type="match status" value="1"/>
</dbReference>
<dbReference type="Pfam" id="PF04560">
    <property type="entry name" value="RNA_pol_Rpb2_7"/>
    <property type="match status" value="1"/>
</dbReference>
<dbReference type="SUPFAM" id="SSF64484">
    <property type="entry name" value="beta and beta-prime subunits of DNA dependent RNA-polymerase"/>
    <property type="match status" value="1"/>
</dbReference>
<dbReference type="PROSITE" id="PS01166">
    <property type="entry name" value="RNA_POL_BETA"/>
    <property type="match status" value="1"/>
</dbReference>
<protein>
    <recommendedName>
        <fullName evidence="1">DNA-directed RNA polymerase subunit beta</fullName>
        <shortName evidence="1">RNAP subunit beta</shortName>
        <ecNumber evidence="1">2.7.7.6</ecNumber>
    </recommendedName>
    <alternativeName>
        <fullName evidence="1">RNA polymerase subunit beta</fullName>
    </alternativeName>
    <alternativeName>
        <fullName evidence="1">Transcriptase subunit beta</fullName>
    </alternativeName>
</protein>
<name>RPOB_NITV9</name>
<reference key="1">
    <citation type="submission" date="2008-10" db="EMBL/GenBank/DDBJ databases">
        <title>Complete sequence of Desulfovibrio vulgaris str. 'Miyazaki F'.</title>
        <authorList>
            <person name="Lucas S."/>
            <person name="Copeland A."/>
            <person name="Lapidus A."/>
            <person name="Glavina del Rio T."/>
            <person name="Dalin E."/>
            <person name="Tice H."/>
            <person name="Bruce D."/>
            <person name="Goodwin L."/>
            <person name="Pitluck S."/>
            <person name="Sims D."/>
            <person name="Brettin T."/>
            <person name="Detter J.C."/>
            <person name="Han C."/>
            <person name="Larimer F."/>
            <person name="Land M."/>
            <person name="Hauser L."/>
            <person name="Kyrpides N."/>
            <person name="Mikhailova N."/>
            <person name="Hazen T.C."/>
            <person name="Richardson P."/>
        </authorList>
    </citation>
    <scope>NUCLEOTIDE SEQUENCE [LARGE SCALE GENOMIC DNA]</scope>
    <source>
        <strain>DSM 19637 / Miyazaki F</strain>
    </source>
</reference>
<proteinExistence type="inferred from homology"/>
<evidence type="ECO:0000255" key="1">
    <source>
        <dbReference type="HAMAP-Rule" id="MF_01321"/>
    </source>
</evidence>
<keyword id="KW-0240">DNA-directed RNA polymerase</keyword>
<keyword id="KW-0548">Nucleotidyltransferase</keyword>
<keyword id="KW-0804">Transcription</keyword>
<keyword id="KW-0808">Transferase</keyword>
<sequence>MGQLTKKFGKIPVSLGIPHLLNLQVDSYVKFLQEGLAERKTDEGLEGVFRSVFPIEDFNRTASLEYVSYDIGEPKFDQAECISKGLTYEAPIRIKVRLVVYDVDDDSGNRTIRDIKEQDIYFGTLPLMTEKGTFIINGTERVIVNQLQRSPGIIFEHDSGKTHSSRKVLYSCRVIPMRGSWLDFDFDHKDILYVRIDRRRKMPATILFKAMGMTKTDILDYFYKKEFYRISADGRVFWEVQKDMFRKDSAFADIAGPDGTVFVKAGKPITKRAWRQICEAGLETIEVAADTLDGLFLADDVVNPATGEVLAEAADEVTPGVQERLREAGIDRLPILHTKGIDTSSSLRDTLVLDKTADKEAAQVEIYRRLRPSSPPTPEIAESFFDNLFRSADYYDLSPVGRYKLNQRLGLDQSLELRVLTDEDILTAIRVLLHLKDSHGPADDIDHLGNRRVRPVGELVENQYRIGLVRMERAIKERMSLQEVSTLMPHDLINPKPVAAVLKEFFGTSQLSQFMDQTNALSEVTHKRRLSALGPGGLTRERAGFEVRDVHTSHYGRICPIETPEGPNIGLIVSLTTYAKVNDYGFIETPYHVIRDTKMTGEVVYLDASREHGEVIAQANAPFDAEGKLADEYVTTRVKGDVLMSPREEVTLMDVSPSQMVSISAALIPFLEHDDANRALMGSNMQRQAVPLLQCEKPLVGTGMEGPVAQDSGACIIAEGPGIVRYADADRIIVSYENGLYPERGGVRAYDLQKFHKSNQNSCFGQKPTCHPGQIVAKGDILADGPGIEDGELALGKNLVVAFMPWCGYNFEDSILISERTVKEDTFTSVHIEEFEVVARDTKLGPEEITRDIPNVGEDMLRNLDGSGIIRIGANVKPDDILVGKITPKGETQLTPEEKLLRAIFGDKARDVKNTSLKVPPGIEGTVIEVKVFNRRSGEKDERARLIEEYELGRLDRKEQDHIRGLGDATRVKLMAVVEGKQIATTLAGKKKGEVIAEAGASVTAEMLADVPLKKLSGLFKNREVNEAVDALLESYDQQVQFISNIYESKRGKVTEGDDLPPGVIKMVKVYIAVKRKLSVGDKMAGRHGNKGVVSCILPAEDMPFFADGRPVDIVLNPLGVPSRMNIGQIMETHLGWAAKEMGRQLAEMLERNDPLKALRNEVKRAFDSPAIDSLVDSMDDEDFRASVAKLGRGIVTKTPVFDGAAEEEIWSWLVRANIDEDGKTVLYDGRTGERFHNRVTTGVMYMLKLHHLVDEKIHARSTGPYSLVTQQPLGGKAQFGGQRLGEMEVWALEAYGAAYLLQEFLTVKSDDVTGRVKMYEKIVKGDNFLEAGLPESFNVLVKELMSLGLDVTLHQEEGKKRPKRVGFMNAL</sequence>
<organism>
    <name type="scientific">Nitratidesulfovibrio vulgaris (strain DSM 19637 / Miyazaki F)</name>
    <name type="common">Desulfovibrio vulgaris</name>
    <dbReference type="NCBI Taxonomy" id="883"/>
    <lineage>
        <taxon>Bacteria</taxon>
        <taxon>Pseudomonadati</taxon>
        <taxon>Thermodesulfobacteriota</taxon>
        <taxon>Desulfovibrionia</taxon>
        <taxon>Desulfovibrionales</taxon>
        <taxon>Desulfovibrionaceae</taxon>
        <taxon>Nitratidesulfovibrio</taxon>
    </lineage>
</organism>